<proteinExistence type="inferred from homology"/>
<organism>
    <name type="scientific">Bartonella quintana (strain Toulouse)</name>
    <name type="common">Rochalimaea quintana</name>
    <dbReference type="NCBI Taxonomy" id="283165"/>
    <lineage>
        <taxon>Bacteria</taxon>
        <taxon>Pseudomonadati</taxon>
        <taxon>Pseudomonadota</taxon>
        <taxon>Alphaproteobacteria</taxon>
        <taxon>Hyphomicrobiales</taxon>
        <taxon>Bartonellaceae</taxon>
        <taxon>Bartonella</taxon>
    </lineage>
</organism>
<name>RS6_BARQU</name>
<gene>
    <name evidence="1" type="primary">rpsF</name>
    <name type="ordered locus">BQ04500</name>
</gene>
<feature type="chain" id="PRO_0000176729" description="Small ribosomal subunit protein bS6">
    <location>
        <begin position="1"/>
        <end position="136"/>
    </location>
</feature>
<feature type="region of interest" description="Disordered" evidence="2">
    <location>
        <begin position="117"/>
        <end position="136"/>
    </location>
</feature>
<feature type="compositionally biased region" description="Basic and acidic residues" evidence="2">
    <location>
        <begin position="117"/>
        <end position="130"/>
    </location>
</feature>
<comment type="function">
    <text evidence="1">Binds together with bS18 to 16S ribosomal RNA.</text>
</comment>
<comment type="similarity">
    <text evidence="1">Belongs to the bacterial ribosomal protein bS6 family.</text>
</comment>
<reference key="1">
    <citation type="journal article" date="2004" name="Proc. Natl. Acad. Sci. U.S.A.">
        <title>The louse-borne human pathogen Bartonella quintana is a genomic derivative of the zoonotic agent Bartonella henselae.</title>
        <authorList>
            <person name="Alsmark U.C.M."/>
            <person name="Frank A.C."/>
            <person name="Karlberg E.O."/>
            <person name="Legault B.-A."/>
            <person name="Ardell D.H."/>
            <person name="Canbaeck B."/>
            <person name="Eriksson A.-S."/>
            <person name="Naeslund A.K."/>
            <person name="Handley S.A."/>
            <person name="Huvet M."/>
            <person name="La Scola B."/>
            <person name="Holmberg M."/>
            <person name="Andersson S.G.E."/>
        </authorList>
    </citation>
    <scope>NUCLEOTIDE SEQUENCE [LARGE SCALE GENOMIC DNA]</scope>
    <source>
        <strain>Toulouse</strain>
    </source>
</reference>
<keyword id="KW-0687">Ribonucleoprotein</keyword>
<keyword id="KW-0689">Ribosomal protein</keyword>
<keyword id="KW-0694">RNA-binding</keyword>
<keyword id="KW-0699">rRNA-binding</keyword>
<accession>Q6G060</accession>
<dbReference type="EMBL" id="BX897700">
    <property type="protein sequence ID" value="CAF25949.1"/>
    <property type="molecule type" value="Genomic_DNA"/>
</dbReference>
<dbReference type="RefSeq" id="WP_011179238.1">
    <property type="nucleotide sequence ID" value="NC_005955.1"/>
</dbReference>
<dbReference type="SMR" id="Q6G060"/>
<dbReference type="GeneID" id="56533181"/>
<dbReference type="KEGG" id="bqu:BQ04500"/>
<dbReference type="eggNOG" id="COG0360">
    <property type="taxonomic scope" value="Bacteria"/>
</dbReference>
<dbReference type="HOGENOM" id="CLU_113441_2_0_5"/>
<dbReference type="OrthoDB" id="9812702at2"/>
<dbReference type="Proteomes" id="UP000000597">
    <property type="component" value="Chromosome"/>
</dbReference>
<dbReference type="GO" id="GO:0022627">
    <property type="term" value="C:cytosolic small ribosomal subunit"/>
    <property type="evidence" value="ECO:0007669"/>
    <property type="project" value="TreeGrafter"/>
</dbReference>
<dbReference type="GO" id="GO:0070181">
    <property type="term" value="F:small ribosomal subunit rRNA binding"/>
    <property type="evidence" value="ECO:0007669"/>
    <property type="project" value="TreeGrafter"/>
</dbReference>
<dbReference type="GO" id="GO:0003735">
    <property type="term" value="F:structural constituent of ribosome"/>
    <property type="evidence" value="ECO:0007669"/>
    <property type="project" value="InterPro"/>
</dbReference>
<dbReference type="GO" id="GO:0006412">
    <property type="term" value="P:translation"/>
    <property type="evidence" value="ECO:0007669"/>
    <property type="project" value="UniProtKB-UniRule"/>
</dbReference>
<dbReference type="CDD" id="cd00473">
    <property type="entry name" value="bS6"/>
    <property type="match status" value="1"/>
</dbReference>
<dbReference type="Gene3D" id="3.30.70.60">
    <property type="match status" value="1"/>
</dbReference>
<dbReference type="HAMAP" id="MF_00360">
    <property type="entry name" value="Ribosomal_bS6"/>
    <property type="match status" value="1"/>
</dbReference>
<dbReference type="InterPro" id="IPR000529">
    <property type="entry name" value="Ribosomal_bS6"/>
</dbReference>
<dbReference type="InterPro" id="IPR035980">
    <property type="entry name" value="Ribosomal_bS6_sf"/>
</dbReference>
<dbReference type="InterPro" id="IPR020814">
    <property type="entry name" value="Ribosomal_S6_plastid/chlpt"/>
</dbReference>
<dbReference type="InterPro" id="IPR014717">
    <property type="entry name" value="Transl_elong_EF1B/ribsomal_bS6"/>
</dbReference>
<dbReference type="NCBIfam" id="TIGR00166">
    <property type="entry name" value="S6"/>
    <property type="match status" value="1"/>
</dbReference>
<dbReference type="PANTHER" id="PTHR21011">
    <property type="entry name" value="MITOCHONDRIAL 28S RIBOSOMAL PROTEIN S6"/>
    <property type="match status" value="1"/>
</dbReference>
<dbReference type="PANTHER" id="PTHR21011:SF1">
    <property type="entry name" value="SMALL RIBOSOMAL SUBUNIT PROTEIN BS6M"/>
    <property type="match status" value="1"/>
</dbReference>
<dbReference type="Pfam" id="PF01250">
    <property type="entry name" value="Ribosomal_S6"/>
    <property type="match status" value="1"/>
</dbReference>
<dbReference type="SUPFAM" id="SSF54995">
    <property type="entry name" value="Ribosomal protein S6"/>
    <property type="match status" value="1"/>
</dbReference>
<sequence length="136" mass="15916">MALYEHIFLARQDIAPQQVDELLSLYKSVIEAHGGKVGRVENWGLRPLAYRIRKNRKAYYVLINIDAPATAIAEVERQMHINEDILRYMTVRVEKHEKEKSAMFSRLDRNGHIGLDEERSRSSRRQREDVIEGVEL</sequence>
<evidence type="ECO:0000255" key="1">
    <source>
        <dbReference type="HAMAP-Rule" id="MF_00360"/>
    </source>
</evidence>
<evidence type="ECO:0000256" key="2">
    <source>
        <dbReference type="SAM" id="MobiDB-lite"/>
    </source>
</evidence>
<evidence type="ECO:0000305" key="3"/>
<protein>
    <recommendedName>
        <fullName evidence="1">Small ribosomal subunit protein bS6</fullName>
    </recommendedName>
    <alternativeName>
        <fullName evidence="3">30S ribosomal protein S6</fullName>
    </alternativeName>
</protein>